<evidence type="ECO:0000255" key="1">
    <source>
        <dbReference type="HAMAP-Rule" id="MF_01559"/>
    </source>
</evidence>
<proteinExistence type="inferred from homology"/>
<feature type="chain" id="PRO_0000206336" description="L-lactate dehydrogenase">
    <location>
        <begin position="1"/>
        <end position="396"/>
    </location>
</feature>
<feature type="domain" description="FMN hydroxy acid dehydrogenase" evidence="1">
    <location>
        <begin position="1"/>
        <end position="380"/>
    </location>
</feature>
<feature type="active site" description="Proton acceptor" evidence="1">
    <location>
        <position position="275"/>
    </location>
</feature>
<feature type="binding site" evidence="1">
    <location>
        <position position="24"/>
    </location>
    <ligand>
        <name>substrate</name>
    </ligand>
</feature>
<feature type="binding site" evidence="1">
    <location>
        <position position="106"/>
    </location>
    <ligand>
        <name>FMN</name>
        <dbReference type="ChEBI" id="CHEBI:58210"/>
    </ligand>
</feature>
<feature type="binding site" evidence="1">
    <location>
        <position position="127"/>
    </location>
    <ligand>
        <name>FMN</name>
        <dbReference type="ChEBI" id="CHEBI:58210"/>
    </ligand>
</feature>
<feature type="binding site" evidence="1">
    <location>
        <position position="129"/>
    </location>
    <ligand>
        <name>substrate</name>
    </ligand>
</feature>
<feature type="binding site" evidence="1">
    <location>
        <position position="155"/>
    </location>
    <ligand>
        <name>FMN</name>
        <dbReference type="ChEBI" id="CHEBI:58210"/>
    </ligand>
</feature>
<feature type="binding site" evidence="1">
    <location>
        <position position="164"/>
    </location>
    <ligand>
        <name>substrate</name>
    </ligand>
</feature>
<feature type="binding site" evidence="1">
    <location>
        <position position="251"/>
    </location>
    <ligand>
        <name>FMN</name>
        <dbReference type="ChEBI" id="CHEBI:58210"/>
    </ligand>
</feature>
<feature type="binding site" evidence="1">
    <location>
        <position position="278"/>
    </location>
    <ligand>
        <name>substrate</name>
    </ligand>
</feature>
<feature type="binding site" evidence="1">
    <location>
        <begin position="306"/>
        <end position="330"/>
    </location>
    <ligand>
        <name>FMN</name>
        <dbReference type="ChEBI" id="CHEBI:58210"/>
    </ligand>
</feature>
<name>LLDD_ECO57</name>
<keyword id="KW-0997">Cell inner membrane</keyword>
<keyword id="KW-1003">Cell membrane</keyword>
<keyword id="KW-0285">Flavoprotein</keyword>
<keyword id="KW-0288">FMN</keyword>
<keyword id="KW-0472">Membrane</keyword>
<keyword id="KW-0560">Oxidoreductase</keyword>
<keyword id="KW-1185">Reference proteome</keyword>
<dbReference type="EC" id="1.1.-.-" evidence="1"/>
<dbReference type="EMBL" id="AE005174">
    <property type="protein sequence ID" value="AAG58752.1"/>
    <property type="molecule type" value="Genomic_DNA"/>
</dbReference>
<dbReference type="EMBL" id="BA000007">
    <property type="protein sequence ID" value="BAB37906.1"/>
    <property type="molecule type" value="Genomic_DNA"/>
</dbReference>
<dbReference type="PIR" id="C91189">
    <property type="entry name" value="C91189"/>
</dbReference>
<dbReference type="PIR" id="D86036">
    <property type="entry name" value="D86036"/>
</dbReference>
<dbReference type="RefSeq" id="NP_312510.1">
    <property type="nucleotide sequence ID" value="NC_002695.1"/>
</dbReference>
<dbReference type="RefSeq" id="WP_000586964.1">
    <property type="nucleotide sequence ID" value="NZ_VOAI01000021.1"/>
</dbReference>
<dbReference type="SMR" id="Q8XDF7"/>
<dbReference type="STRING" id="155864.Z5032"/>
<dbReference type="GeneID" id="915575"/>
<dbReference type="GeneID" id="93778319"/>
<dbReference type="KEGG" id="ece:Z5032"/>
<dbReference type="KEGG" id="ecs:ECs_4483"/>
<dbReference type="PATRIC" id="fig|386585.9.peg.4698"/>
<dbReference type="eggNOG" id="COG1304">
    <property type="taxonomic scope" value="Bacteria"/>
</dbReference>
<dbReference type="HOGENOM" id="CLU_020639_0_0_6"/>
<dbReference type="OMA" id="RIWFRPK"/>
<dbReference type="Proteomes" id="UP000000558">
    <property type="component" value="Chromosome"/>
</dbReference>
<dbReference type="Proteomes" id="UP000002519">
    <property type="component" value="Chromosome"/>
</dbReference>
<dbReference type="GO" id="GO:0005886">
    <property type="term" value="C:plasma membrane"/>
    <property type="evidence" value="ECO:0007669"/>
    <property type="project" value="UniProtKB-SubCell"/>
</dbReference>
<dbReference type="GO" id="GO:0010181">
    <property type="term" value="F:FMN binding"/>
    <property type="evidence" value="ECO:0007669"/>
    <property type="project" value="InterPro"/>
</dbReference>
<dbReference type="GO" id="GO:0004459">
    <property type="term" value="F:L-lactate dehydrogenase activity"/>
    <property type="evidence" value="ECO:0007669"/>
    <property type="project" value="UniProtKB-UniRule"/>
</dbReference>
<dbReference type="GO" id="GO:0009060">
    <property type="term" value="P:aerobic respiration"/>
    <property type="evidence" value="ECO:0007669"/>
    <property type="project" value="TreeGrafter"/>
</dbReference>
<dbReference type="GO" id="GO:0006089">
    <property type="term" value="P:lactate metabolic process"/>
    <property type="evidence" value="ECO:0007669"/>
    <property type="project" value="UniProtKB-UniRule"/>
</dbReference>
<dbReference type="CDD" id="cd02809">
    <property type="entry name" value="alpha_hydroxyacid_oxid_FMN"/>
    <property type="match status" value="1"/>
</dbReference>
<dbReference type="FunFam" id="3.20.20.70:FF:000029">
    <property type="entry name" value="L-lactate dehydrogenase"/>
    <property type="match status" value="1"/>
</dbReference>
<dbReference type="Gene3D" id="3.20.20.70">
    <property type="entry name" value="Aldolase class I"/>
    <property type="match status" value="1"/>
</dbReference>
<dbReference type="HAMAP" id="MF_01559">
    <property type="entry name" value="L_lact_dehydr"/>
    <property type="match status" value="1"/>
</dbReference>
<dbReference type="InterPro" id="IPR013785">
    <property type="entry name" value="Aldolase_TIM"/>
</dbReference>
<dbReference type="InterPro" id="IPR012133">
    <property type="entry name" value="Alpha-hydoxy_acid_DH_FMN"/>
</dbReference>
<dbReference type="InterPro" id="IPR000262">
    <property type="entry name" value="FMN-dep_DH"/>
</dbReference>
<dbReference type="InterPro" id="IPR037396">
    <property type="entry name" value="FMN_HAD"/>
</dbReference>
<dbReference type="InterPro" id="IPR008259">
    <property type="entry name" value="FMN_hydac_DH_AS"/>
</dbReference>
<dbReference type="InterPro" id="IPR020920">
    <property type="entry name" value="LldD"/>
</dbReference>
<dbReference type="NCBIfam" id="NF033901">
    <property type="entry name" value="L_lactate_LldD"/>
    <property type="match status" value="1"/>
</dbReference>
<dbReference type="NCBIfam" id="NF008398">
    <property type="entry name" value="PRK11197.1"/>
    <property type="match status" value="1"/>
</dbReference>
<dbReference type="PANTHER" id="PTHR10578:SF85">
    <property type="entry name" value="L-LACTATE DEHYDROGENASE"/>
    <property type="match status" value="1"/>
</dbReference>
<dbReference type="PANTHER" id="PTHR10578">
    <property type="entry name" value="S -2-HYDROXY-ACID OXIDASE-RELATED"/>
    <property type="match status" value="1"/>
</dbReference>
<dbReference type="Pfam" id="PF01070">
    <property type="entry name" value="FMN_dh"/>
    <property type="match status" value="1"/>
</dbReference>
<dbReference type="PIRSF" id="PIRSF000138">
    <property type="entry name" value="Al-hdrx_acd_dh"/>
    <property type="match status" value="1"/>
</dbReference>
<dbReference type="SUPFAM" id="SSF51395">
    <property type="entry name" value="FMN-linked oxidoreductases"/>
    <property type="match status" value="1"/>
</dbReference>
<dbReference type="PROSITE" id="PS00557">
    <property type="entry name" value="FMN_HYDROXY_ACID_DH_1"/>
    <property type="match status" value="1"/>
</dbReference>
<dbReference type="PROSITE" id="PS51349">
    <property type="entry name" value="FMN_HYDROXY_ACID_DH_2"/>
    <property type="match status" value="1"/>
</dbReference>
<protein>
    <recommendedName>
        <fullName evidence="1">L-lactate dehydrogenase</fullName>
        <ecNumber evidence="1">1.1.-.-</ecNumber>
    </recommendedName>
</protein>
<sequence>MIISAASDYRAAAQRILPPFLFHYMDGGAYSEYTLRRNVEDLSEVALRQRILKNMSDLSLETTLFNEKLSMPVALAPVGLCGMYARRGEVQAAKAADAHGIPFTLSTVSVCPIEEVAPAIKRPMWFQLYVLRDRGFMRNALERAKAAGCSTLVFTVDMPTPGARYRDAHSGMSGPNAAMRRYLQAVTHPQWAWDVGLNGRPHDLGNISAYLGKPTGLEDYIGWLGNNFDPSISWKDLEWIRDFWDGPMVIKGILDPEDARDAVRFGADGIVVSNHGGRQLDGVLSSARALPAIADAVKGDIAILADSGIRNGLDVVRMIALGADTVLLGRAFLYALATAGQAGVANLLNLIEKEMKVAMTLTGAKSISEITQDSLVQGLGKELPTALAPMAKGNAA</sequence>
<organism>
    <name type="scientific">Escherichia coli O157:H7</name>
    <dbReference type="NCBI Taxonomy" id="83334"/>
    <lineage>
        <taxon>Bacteria</taxon>
        <taxon>Pseudomonadati</taxon>
        <taxon>Pseudomonadota</taxon>
        <taxon>Gammaproteobacteria</taxon>
        <taxon>Enterobacterales</taxon>
        <taxon>Enterobacteriaceae</taxon>
        <taxon>Escherichia</taxon>
    </lineage>
</organism>
<comment type="function">
    <text evidence="1">Catalyzes the conversion of L-lactate to pyruvate. Is coupled to the respiratory chain.</text>
</comment>
<comment type="catalytic activity">
    <reaction evidence="1">
        <text>(S)-lactate + A = pyruvate + AH2</text>
        <dbReference type="Rhea" id="RHEA:45816"/>
        <dbReference type="ChEBI" id="CHEBI:13193"/>
        <dbReference type="ChEBI" id="CHEBI:15361"/>
        <dbReference type="ChEBI" id="CHEBI:16651"/>
        <dbReference type="ChEBI" id="CHEBI:17499"/>
    </reaction>
</comment>
<comment type="cofactor">
    <cofactor evidence="1">
        <name>FMN</name>
        <dbReference type="ChEBI" id="CHEBI:58210"/>
    </cofactor>
</comment>
<comment type="subcellular location">
    <subcellularLocation>
        <location evidence="1">Cell inner membrane</location>
        <topology evidence="1">Peripheral membrane protein</topology>
    </subcellularLocation>
</comment>
<comment type="similarity">
    <text evidence="1">Belongs to the FMN-dependent alpha-hydroxy acid dehydrogenase family.</text>
</comment>
<gene>
    <name evidence="1" type="primary">lldD</name>
    <name type="ordered locus">Z5032</name>
    <name type="ordered locus">ECs4483</name>
</gene>
<accession>Q8XDF7</accession>
<accession>Q7A9U9</accession>
<reference key="1">
    <citation type="journal article" date="2001" name="Nature">
        <title>Genome sequence of enterohaemorrhagic Escherichia coli O157:H7.</title>
        <authorList>
            <person name="Perna N.T."/>
            <person name="Plunkett G. III"/>
            <person name="Burland V."/>
            <person name="Mau B."/>
            <person name="Glasner J.D."/>
            <person name="Rose D.J."/>
            <person name="Mayhew G.F."/>
            <person name="Evans P.S."/>
            <person name="Gregor J."/>
            <person name="Kirkpatrick H.A."/>
            <person name="Posfai G."/>
            <person name="Hackett J."/>
            <person name="Klink S."/>
            <person name="Boutin A."/>
            <person name="Shao Y."/>
            <person name="Miller L."/>
            <person name="Grotbeck E.J."/>
            <person name="Davis N.W."/>
            <person name="Lim A."/>
            <person name="Dimalanta E.T."/>
            <person name="Potamousis K."/>
            <person name="Apodaca J."/>
            <person name="Anantharaman T.S."/>
            <person name="Lin J."/>
            <person name="Yen G."/>
            <person name="Schwartz D.C."/>
            <person name="Welch R.A."/>
            <person name="Blattner F.R."/>
        </authorList>
    </citation>
    <scope>NUCLEOTIDE SEQUENCE [LARGE SCALE GENOMIC DNA]</scope>
    <source>
        <strain>O157:H7 / EDL933 / ATCC 700927 / EHEC</strain>
    </source>
</reference>
<reference key="2">
    <citation type="journal article" date="2001" name="DNA Res.">
        <title>Complete genome sequence of enterohemorrhagic Escherichia coli O157:H7 and genomic comparison with a laboratory strain K-12.</title>
        <authorList>
            <person name="Hayashi T."/>
            <person name="Makino K."/>
            <person name="Ohnishi M."/>
            <person name="Kurokawa K."/>
            <person name="Ishii K."/>
            <person name="Yokoyama K."/>
            <person name="Han C.-G."/>
            <person name="Ohtsubo E."/>
            <person name="Nakayama K."/>
            <person name="Murata T."/>
            <person name="Tanaka M."/>
            <person name="Tobe T."/>
            <person name="Iida T."/>
            <person name="Takami H."/>
            <person name="Honda T."/>
            <person name="Sasakawa C."/>
            <person name="Ogasawara N."/>
            <person name="Yasunaga T."/>
            <person name="Kuhara S."/>
            <person name="Shiba T."/>
            <person name="Hattori M."/>
            <person name="Shinagawa H."/>
        </authorList>
    </citation>
    <scope>NUCLEOTIDE SEQUENCE [LARGE SCALE GENOMIC DNA]</scope>
    <source>
        <strain>O157:H7 / Sakai / RIMD 0509952 / EHEC</strain>
    </source>
</reference>